<protein>
    <recommendedName>
        <fullName>Putative lipid kinase SAS0691</fullName>
        <ecNumber>2.7.1.-</ecNumber>
    </recommendedName>
</protein>
<comment type="function">
    <text evidence="1">May catalyze the ATP-dependent phosphorylation of lipids other than diacylglycerol (DAG).</text>
</comment>
<comment type="cofactor">
    <cofactor evidence="1">
        <name>Mg(2+)</name>
        <dbReference type="ChEBI" id="CHEBI:18420"/>
    </cofactor>
    <text evidence="1">Binds 1 Mg(2+) ion per subunit. This ion appears to have a structural role and is required for catalytic activity.</text>
</comment>
<comment type="similarity">
    <text evidence="3">Belongs to the diacylglycerol/lipid kinase family.</text>
</comment>
<gene>
    <name type="ordered locus">SAS0691</name>
</gene>
<name>Y691_STAAS</name>
<sequence>MENKYTHGVLFYHEHSGLKNINQGIGEVTTALSSICKHLSIQLSENEGDIIKYCQEIKTKNYAKDVDILFILGGDGTVNELINGVMTHDLQLPIGILPGGTFNDFTKTLNIAPNHKQASEQMISAQVGKYDVIKINNQYALNFVGLGLIVQNAENVQDGSKDIFGKLSYIGSTVKTLLNPTQFNYQLSIDDKTYSGETTMILTANGPFIGGSRIPLTDLSPQDGELNTFIFNEQSFSILNDIFKKRDSMNWNEITQGIEHIPGKKISLTTDPAMKVDIDGEISLETPIDIEVIPNAIQLLTVNDL</sequence>
<organism>
    <name type="scientific">Staphylococcus aureus (strain MSSA476)</name>
    <dbReference type="NCBI Taxonomy" id="282459"/>
    <lineage>
        <taxon>Bacteria</taxon>
        <taxon>Bacillati</taxon>
        <taxon>Bacillota</taxon>
        <taxon>Bacilli</taxon>
        <taxon>Bacillales</taxon>
        <taxon>Staphylococcaceae</taxon>
        <taxon>Staphylococcus</taxon>
    </lineage>
</organism>
<feature type="chain" id="PRO_0000386515" description="Putative lipid kinase SAS0691">
    <location>
        <begin position="1"/>
        <end position="305"/>
    </location>
</feature>
<feature type="domain" description="DAGKc" evidence="2">
    <location>
        <begin position="3"/>
        <end position="139"/>
    </location>
</feature>
<feature type="active site" description="Proton acceptor" evidence="1">
    <location>
        <position position="281"/>
    </location>
</feature>
<feature type="binding site" evidence="2">
    <location>
        <position position="44"/>
    </location>
    <ligand>
        <name>ATP</name>
        <dbReference type="ChEBI" id="CHEBI:30616"/>
    </ligand>
</feature>
<feature type="binding site" evidence="2">
    <location>
        <begin position="74"/>
        <end position="80"/>
    </location>
    <ligand>
        <name>ATP</name>
        <dbReference type="ChEBI" id="CHEBI:30616"/>
    </ligand>
</feature>
<feature type="binding site" evidence="2">
    <location>
        <position position="101"/>
    </location>
    <ligand>
        <name>ATP</name>
        <dbReference type="ChEBI" id="CHEBI:30616"/>
    </ligand>
</feature>
<feature type="binding site" evidence="1">
    <location>
        <position position="220"/>
    </location>
    <ligand>
        <name>Mg(2+)</name>
        <dbReference type="ChEBI" id="CHEBI:18420"/>
    </ligand>
</feature>
<feature type="binding site" evidence="1">
    <location>
        <position position="223"/>
    </location>
    <ligand>
        <name>Mg(2+)</name>
        <dbReference type="ChEBI" id="CHEBI:18420"/>
    </ligand>
</feature>
<feature type="binding site" evidence="1">
    <location>
        <position position="225"/>
    </location>
    <ligand>
        <name>Mg(2+)</name>
        <dbReference type="ChEBI" id="CHEBI:18420"/>
    </ligand>
</feature>
<keyword id="KW-0067">ATP-binding</keyword>
<keyword id="KW-0418">Kinase</keyword>
<keyword id="KW-0444">Lipid biosynthesis</keyword>
<keyword id="KW-0443">Lipid metabolism</keyword>
<keyword id="KW-0460">Magnesium</keyword>
<keyword id="KW-0479">Metal-binding</keyword>
<keyword id="KW-0547">Nucleotide-binding</keyword>
<keyword id="KW-0594">Phospholipid biosynthesis</keyword>
<keyword id="KW-1208">Phospholipid metabolism</keyword>
<keyword id="KW-0808">Transferase</keyword>
<evidence type="ECO:0000250" key="1"/>
<evidence type="ECO:0000255" key="2">
    <source>
        <dbReference type="PROSITE-ProRule" id="PRU00783"/>
    </source>
</evidence>
<evidence type="ECO:0000305" key="3"/>
<reference key="1">
    <citation type="journal article" date="2004" name="Proc. Natl. Acad. Sci. U.S.A.">
        <title>Complete genomes of two clinical Staphylococcus aureus strains: evidence for the rapid evolution of virulence and drug resistance.</title>
        <authorList>
            <person name="Holden M.T.G."/>
            <person name="Feil E.J."/>
            <person name="Lindsay J.A."/>
            <person name="Peacock S.J."/>
            <person name="Day N.P.J."/>
            <person name="Enright M.C."/>
            <person name="Foster T.J."/>
            <person name="Moore C.E."/>
            <person name="Hurst L."/>
            <person name="Atkin R."/>
            <person name="Barron A."/>
            <person name="Bason N."/>
            <person name="Bentley S.D."/>
            <person name="Chillingworth C."/>
            <person name="Chillingworth T."/>
            <person name="Churcher C."/>
            <person name="Clark L."/>
            <person name="Corton C."/>
            <person name="Cronin A."/>
            <person name="Doggett J."/>
            <person name="Dowd L."/>
            <person name="Feltwell T."/>
            <person name="Hance Z."/>
            <person name="Harris B."/>
            <person name="Hauser H."/>
            <person name="Holroyd S."/>
            <person name="Jagels K."/>
            <person name="James K.D."/>
            <person name="Lennard N."/>
            <person name="Line A."/>
            <person name="Mayes R."/>
            <person name="Moule S."/>
            <person name="Mungall K."/>
            <person name="Ormond D."/>
            <person name="Quail M.A."/>
            <person name="Rabbinowitsch E."/>
            <person name="Rutherford K.M."/>
            <person name="Sanders M."/>
            <person name="Sharp S."/>
            <person name="Simmonds M."/>
            <person name="Stevens K."/>
            <person name="Whitehead S."/>
            <person name="Barrell B.G."/>
            <person name="Spratt B.G."/>
            <person name="Parkhill J."/>
        </authorList>
    </citation>
    <scope>NUCLEOTIDE SEQUENCE [LARGE SCALE GENOMIC DNA]</scope>
    <source>
        <strain>MSSA476</strain>
    </source>
</reference>
<accession>Q6GBA4</accession>
<dbReference type="EC" id="2.7.1.-"/>
<dbReference type="EMBL" id="BX571857">
    <property type="protein sequence ID" value="CAG42467.1"/>
    <property type="molecule type" value="Genomic_DNA"/>
</dbReference>
<dbReference type="RefSeq" id="WP_000429008.1">
    <property type="nucleotide sequence ID" value="NC_002953.3"/>
</dbReference>
<dbReference type="SMR" id="Q6GBA4"/>
<dbReference type="KEGG" id="sas:SAS0691"/>
<dbReference type="HOGENOM" id="CLU_045532_1_0_9"/>
<dbReference type="GO" id="GO:0005886">
    <property type="term" value="C:plasma membrane"/>
    <property type="evidence" value="ECO:0007669"/>
    <property type="project" value="TreeGrafter"/>
</dbReference>
<dbReference type="GO" id="GO:0005524">
    <property type="term" value="F:ATP binding"/>
    <property type="evidence" value="ECO:0007669"/>
    <property type="project" value="UniProtKB-KW"/>
</dbReference>
<dbReference type="GO" id="GO:0004143">
    <property type="term" value="F:ATP-dependent diacylglycerol kinase activity"/>
    <property type="evidence" value="ECO:0007669"/>
    <property type="project" value="TreeGrafter"/>
</dbReference>
<dbReference type="GO" id="GO:0046872">
    <property type="term" value="F:metal ion binding"/>
    <property type="evidence" value="ECO:0007669"/>
    <property type="project" value="UniProtKB-KW"/>
</dbReference>
<dbReference type="GO" id="GO:0008654">
    <property type="term" value="P:phospholipid biosynthetic process"/>
    <property type="evidence" value="ECO:0007669"/>
    <property type="project" value="UniProtKB-KW"/>
</dbReference>
<dbReference type="Gene3D" id="2.60.200.40">
    <property type="match status" value="1"/>
</dbReference>
<dbReference type="Gene3D" id="3.40.50.10330">
    <property type="entry name" value="Probable inorganic polyphosphate/atp-NAD kinase, domain 1"/>
    <property type="match status" value="1"/>
</dbReference>
<dbReference type="InterPro" id="IPR017438">
    <property type="entry name" value="ATP-NAD_kinase_N"/>
</dbReference>
<dbReference type="InterPro" id="IPR005218">
    <property type="entry name" value="Diacylglycerol/lipid_kinase"/>
</dbReference>
<dbReference type="InterPro" id="IPR001206">
    <property type="entry name" value="Diacylglycerol_kinase_cat_dom"/>
</dbReference>
<dbReference type="InterPro" id="IPR050187">
    <property type="entry name" value="Lipid_Phosphate_FormReg"/>
</dbReference>
<dbReference type="InterPro" id="IPR016064">
    <property type="entry name" value="NAD/diacylglycerol_kinase_sf"/>
</dbReference>
<dbReference type="InterPro" id="IPR045540">
    <property type="entry name" value="YegS/DAGK_C"/>
</dbReference>
<dbReference type="NCBIfam" id="TIGR00147">
    <property type="entry name" value="YegS/Rv2252/BmrU family lipid kinase"/>
    <property type="match status" value="1"/>
</dbReference>
<dbReference type="PANTHER" id="PTHR12358:SF106">
    <property type="entry name" value="LIPID KINASE YEGS"/>
    <property type="match status" value="1"/>
</dbReference>
<dbReference type="PANTHER" id="PTHR12358">
    <property type="entry name" value="SPHINGOSINE KINASE"/>
    <property type="match status" value="1"/>
</dbReference>
<dbReference type="Pfam" id="PF00781">
    <property type="entry name" value="DAGK_cat"/>
    <property type="match status" value="1"/>
</dbReference>
<dbReference type="Pfam" id="PF19279">
    <property type="entry name" value="YegS_C"/>
    <property type="match status" value="1"/>
</dbReference>
<dbReference type="SMART" id="SM00046">
    <property type="entry name" value="DAGKc"/>
    <property type="match status" value="1"/>
</dbReference>
<dbReference type="SUPFAM" id="SSF111331">
    <property type="entry name" value="NAD kinase/diacylglycerol kinase-like"/>
    <property type="match status" value="1"/>
</dbReference>
<dbReference type="PROSITE" id="PS50146">
    <property type="entry name" value="DAGK"/>
    <property type="match status" value="1"/>
</dbReference>
<proteinExistence type="inferred from homology"/>